<organism>
    <name type="scientific">Helicobacter pylori (strain Shi470)</name>
    <dbReference type="NCBI Taxonomy" id="512562"/>
    <lineage>
        <taxon>Bacteria</taxon>
        <taxon>Pseudomonadati</taxon>
        <taxon>Campylobacterota</taxon>
        <taxon>Epsilonproteobacteria</taxon>
        <taxon>Campylobacterales</taxon>
        <taxon>Helicobacteraceae</taxon>
        <taxon>Helicobacter</taxon>
    </lineage>
</organism>
<feature type="chain" id="PRO_1000142527" description="Large ribosomal subunit protein bL25">
    <location>
        <begin position="1"/>
        <end position="178"/>
    </location>
</feature>
<comment type="function">
    <text evidence="1">This is one of the proteins that binds to the 5S RNA in the ribosome where it forms part of the central protuberance.</text>
</comment>
<comment type="subunit">
    <text evidence="1">Part of the 50S ribosomal subunit; part of the 5S rRNA/L5/L18/L25 subcomplex. Contacts the 5S rRNA. Binds to the 5S rRNA independently of L5 and L18.</text>
</comment>
<comment type="similarity">
    <text evidence="1">Belongs to the bacterial ribosomal protein bL25 family. CTC subfamily.</text>
</comment>
<keyword id="KW-0687">Ribonucleoprotein</keyword>
<keyword id="KW-0689">Ribosomal protein</keyword>
<keyword id="KW-0694">RNA-binding</keyword>
<keyword id="KW-0699">rRNA-binding</keyword>
<dbReference type="EMBL" id="CP001072">
    <property type="protein sequence ID" value="ACD48924.1"/>
    <property type="molecule type" value="Genomic_DNA"/>
</dbReference>
<dbReference type="RefSeq" id="WP_000889354.1">
    <property type="nucleotide sequence ID" value="NC_010698.2"/>
</dbReference>
<dbReference type="SMR" id="B2UVP2"/>
<dbReference type="KEGG" id="hps:HPSH_07665"/>
<dbReference type="HOGENOM" id="CLU_075939_2_2_7"/>
<dbReference type="GO" id="GO:0022625">
    <property type="term" value="C:cytosolic large ribosomal subunit"/>
    <property type="evidence" value="ECO:0007669"/>
    <property type="project" value="TreeGrafter"/>
</dbReference>
<dbReference type="GO" id="GO:0008097">
    <property type="term" value="F:5S rRNA binding"/>
    <property type="evidence" value="ECO:0007669"/>
    <property type="project" value="InterPro"/>
</dbReference>
<dbReference type="GO" id="GO:0003735">
    <property type="term" value="F:structural constituent of ribosome"/>
    <property type="evidence" value="ECO:0007669"/>
    <property type="project" value="InterPro"/>
</dbReference>
<dbReference type="GO" id="GO:0006412">
    <property type="term" value="P:translation"/>
    <property type="evidence" value="ECO:0007669"/>
    <property type="project" value="UniProtKB-UniRule"/>
</dbReference>
<dbReference type="CDD" id="cd00495">
    <property type="entry name" value="Ribosomal_L25_TL5_CTC"/>
    <property type="match status" value="1"/>
</dbReference>
<dbReference type="Gene3D" id="2.170.120.20">
    <property type="entry name" value="Ribosomal protein L25, beta domain"/>
    <property type="match status" value="1"/>
</dbReference>
<dbReference type="Gene3D" id="2.40.240.10">
    <property type="entry name" value="Ribosomal Protein L25, Chain P"/>
    <property type="match status" value="1"/>
</dbReference>
<dbReference type="HAMAP" id="MF_01334">
    <property type="entry name" value="Ribosomal_bL25_CTC"/>
    <property type="match status" value="1"/>
</dbReference>
<dbReference type="InterPro" id="IPR020056">
    <property type="entry name" value="Rbsml_bL25/Gln-tRNA_synth_N"/>
</dbReference>
<dbReference type="InterPro" id="IPR011035">
    <property type="entry name" value="Ribosomal_bL25/Gln-tRNA_synth"/>
</dbReference>
<dbReference type="InterPro" id="IPR020057">
    <property type="entry name" value="Ribosomal_bL25_b-dom"/>
</dbReference>
<dbReference type="InterPro" id="IPR037121">
    <property type="entry name" value="Ribosomal_bL25_C"/>
</dbReference>
<dbReference type="InterPro" id="IPR001021">
    <property type="entry name" value="Ribosomal_bL25_long"/>
</dbReference>
<dbReference type="InterPro" id="IPR029751">
    <property type="entry name" value="Ribosomal_L25_dom"/>
</dbReference>
<dbReference type="InterPro" id="IPR020930">
    <property type="entry name" value="Ribosomal_uL5_bac-type"/>
</dbReference>
<dbReference type="NCBIfam" id="TIGR00731">
    <property type="entry name" value="bL25_bact_ctc"/>
    <property type="match status" value="1"/>
</dbReference>
<dbReference type="NCBIfam" id="NF004129">
    <property type="entry name" value="PRK05618.1-4"/>
    <property type="match status" value="1"/>
</dbReference>
<dbReference type="PANTHER" id="PTHR33284">
    <property type="entry name" value="RIBOSOMAL PROTEIN L25/GLN-TRNA SYNTHETASE, ANTI-CODON-BINDING DOMAIN-CONTAINING PROTEIN"/>
    <property type="match status" value="1"/>
</dbReference>
<dbReference type="PANTHER" id="PTHR33284:SF1">
    <property type="entry name" value="RIBOSOMAL PROTEIN L25_GLN-TRNA SYNTHETASE, ANTI-CODON-BINDING DOMAIN-CONTAINING PROTEIN"/>
    <property type="match status" value="1"/>
</dbReference>
<dbReference type="Pfam" id="PF01386">
    <property type="entry name" value="Ribosomal_L25p"/>
    <property type="match status" value="1"/>
</dbReference>
<dbReference type="Pfam" id="PF14693">
    <property type="entry name" value="Ribosomal_TL5_C"/>
    <property type="match status" value="1"/>
</dbReference>
<dbReference type="SUPFAM" id="SSF50715">
    <property type="entry name" value="Ribosomal protein L25-like"/>
    <property type="match status" value="1"/>
</dbReference>
<protein>
    <recommendedName>
        <fullName evidence="1">Large ribosomal subunit protein bL25</fullName>
    </recommendedName>
    <alternativeName>
        <fullName evidence="2">50S ribosomal protein L25</fullName>
    </alternativeName>
    <alternativeName>
        <fullName evidence="1">General stress protein CTC</fullName>
    </alternativeName>
</protein>
<accession>B2UVP2</accession>
<reference key="1">
    <citation type="submission" date="2008-05" db="EMBL/GenBank/DDBJ databases">
        <title>Genome sequence of Helicobacter pylori from the remote Amazon: traces of Asian ancestry of the first Americans.</title>
        <authorList>
            <person name="Kersulyte D."/>
            <person name="Kalia A."/>
            <person name="Gilman R.H."/>
            <person name="Berg D.E."/>
        </authorList>
    </citation>
    <scope>NUCLEOTIDE SEQUENCE [LARGE SCALE GENOMIC DNA]</scope>
    <source>
        <strain>Shi470</strain>
    </source>
</reference>
<evidence type="ECO:0000255" key="1">
    <source>
        <dbReference type="HAMAP-Rule" id="MF_01334"/>
    </source>
</evidence>
<evidence type="ECO:0000305" key="2"/>
<proteinExistence type="inferred from homology"/>
<sequence length="178" mass="19881">MLEGVIRESITKANAKALKKDGYLIANVYGKGVENVNGAFKLNPFIKYLKEKKHLIFPVKLGDKTFEVVVQEYQKNPVTNELIHVDLLAVTKGVKSKFKVPVKHQGTPVGLKNKGILMLSKKRISVECAPEHLPDHYLVDVTPLDVNESILVRDLEKHENVKILDHDSIAVIGVIKAK</sequence>
<name>RL25_HELPS</name>
<gene>
    <name evidence="1" type="primary">rplY</name>
    <name evidence="1" type="synonym">ctc</name>
    <name type="ordered locus">HPSH_07665</name>
</gene>